<accession>A9A555</accession>
<reference key="1">
    <citation type="journal article" date="2010" name="Proc. Natl. Acad. Sci. U.S.A.">
        <title>Nitrosopumilus maritimus genome reveals unique mechanisms for nitrification and autotrophy in globally distributed marine crenarchaea.</title>
        <authorList>
            <person name="Walker C.B."/>
            <person name="de la Torre J.R."/>
            <person name="Klotz M.G."/>
            <person name="Urakawa H."/>
            <person name="Pinel N."/>
            <person name="Arp D.J."/>
            <person name="Brochier-Armanet C."/>
            <person name="Chain P.S."/>
            <person name="Chan P.P."/>
            <person name="Gollabgir A."/>
            <person name="Hemp J."/>
            <person name="Hugler M."/>
            <person name="Karr E.A."/>
            <person name="Konneke M."/>
            <person name="Shin M."/>
            <person name="Lawton T.J."/>
            <person name="Lowe T."/>
            <person name="Martens-Habbena W."/>
            <person name="Sayavedra-Soto L.A."/>
            <person name="Lang D."/>
            <person name="Sievert S.M."/>
            <person name="Rosenzweig A.C."/>
            <person name="Manning G."/>
            <person name="Stahl D.A."/>
        </authorList>
    </citation>
    <scope>NUCLEOTIDE SEQUENCE [LARGE SCALE GENOMIC DNA]</scope>
    <source>
        <strain>SCM1</strain>
    </source>
</reference>
<keyword id="KW-0227">DNA damage</keyword>
<keyword id="KW-0234">DNA repair</keyword>
<keyword id="KW-0255">Endonuclease</keyword>
<keyword id="KW-0378">Hydrolase</keyword>
<keyword id="KW-0479">Metal-binding</keyword>
<keyword id="KW-0540">Nuclease</keyword>
<keyword id="KW-1185">Reference proteome</keyword>
<keyword id="KW-0862">Zinc</keyword>
<gene>
    <name evidence="1" type="primary">nfo</name>
    <name type="ordered locus">Nmar_0064</name>
</gene>
<sequence length="279" mass="30994">MQIGCHVSISGSIDKSVDNAVERECSAFQIFTRNPRGWHAKTLTKDDITNFKSKLKESKIDRFATCAHMPYLPNLATPKEDGFEKSVKTLVDEVERCAQLGIPYLVTHLGSHLGTGEEAGIKKLVKGLTEAGKTKNDVMILLENTAGQKNSVGSDFKQLGEIFKQLKPAKKFGVCLDTCHAFVFGYDLRTEAKVKETFSEFDKYVGIDNLKILHLNDAKGDLGCNLDRHYHLGMGGIGEKGISAIVKFANKKKIPIILETPIDDDRDDFENIRKAKEFA</sequence>
<comment type="function">
    <text evidence="1">Endonuclease IV plays a role in DNA repair. It cleaves phosphodiester bonds at apurinic or apyrimidinic (AP) sites, generating a 3'-hydroxyl group and a 5'-terminal sugar phosphate.</text>
</comment>
<comment type="catalytic activity">
    <reaction evidence="1">
        <text>Endonucleolytic cleavage to 5'-phosphooligonucleotide end-products.</text>
        <dbReference type="EC" id="3.1.21.2"/>
    </reaction>
</comment>
<comment type="cofactor">
    <cofactor evidence="1">
        <name>Zn(2+)</name>
        <dbReference type="ChEBI" id="CHEBI:29105"/>
    </cofactor>
    <text evidence="1">Binds 3 Zn(2+) ions.</text>
</comment>
<comment type="similarity">
    <text evidence="1">Belongs to the AP endonuclease 2 family.</text>
</comment>
<protein>
    <recommendedName>
        <fullName evidence="1">Probable endonuclease 4</fullName>
        <ecNumber evidence="1">3.1.21.2</ecNumber>
    </recommendedName>
    <alternativeName>
        <fullName evidence="1">Endodeoxyribonuclease IV</fullName>
    </alternativeName>
    <alternativeName>
        <fullName evidence="1">Endonuclease IV</fullName>
    </alternativeName>
</protein>
<feature type="chain" id="PRO_1000096894" description="Probable endonuclease 4">
    <location>
        <begin position="1"/>
        <end position="279"/>
    </location>
</feature>
<feature type="binding site" evidence="1">
    <location>
        <position position="68"/>
    </location>
    <ligand>
        <name>Zn(2+)</name>
        <dbReference type="ChEBI" id="CHEBI:29105"/>
        <label>1</label>
    </ligand>
</feature>
<feature type="binding site" evidence="1">
    <location>
        <position position="108"/>
    </location>
    <ligand>
        <name>Zn(2+)</name>
        <dbReference type="ChEBI" id="CHEBI:29105"/>
        <label>1</label>
    </ligand>
</feature>
<feature type="binding site" evidence="1">
    <location>
        <position position="143"/>
    </location>
    <ligand>
        <name>Zn(2+)</name>
        <dbReference type="ChEBI" id="CHEBI:29105"/>
        <label>1</label>
    </ligand>
</feature>
<feature type="binding site" evidence="1">
    <location>
        <position position="143"/>
    </location>
    <ligand>
        <name>Zn(2+)</name>
        <dbReference type="ChEBI" id="CHEBI:29105"/>
        <label>2</label>
    </ligand>
</feature>
<feature type="binding site" evidence="1">
    <location>
        <position position="177"/>
    </location>
    <ligand>
        <name>Zn(2+)</name>
        <dbReference type="ChEBI" id="CHEBI:29105"/>
        <label>2</label>
    </ligand>
</feature>
<feature type="binding site" evidence="1">
    <location>
        <position position="180"/>
    </location>
    <ligand>
        <name>Zn(2+)</name>
        <dbReference type="ChEBI" id="CHEBI:29105"/>
        <label>3</label>
    </ligand>
</feature>
<feature type="binding site" evidence="1">
    <location>
        <position position="214"/>
    </location>
    <ligand>
        <name>Zn(2+)</name>
        <dbReference type="ChEBI" id="CHEBI:29105"/>
        <label>2</label>
    </ligand>
</feature>
<feature type="binding site" evidence="1">
    <location>
        <position position="227"/>
    </location>
    <ligand>
        <name>Zn(2+)</name>
        <dbReference type="ChEBI" id="CHEBI:29105"/>
        <label>3</label>
    </ligand>
</feature>
<feature type="binding site" evidence="1">
    <location>
        <position position="229"/>
    </location>
    <ligand>
        <name>Zn(2+)</name>
        <dbReference type="ChEBI" id="CHEBI:29105"/>
        <label>3</label>
    </ligand>
</feature>
<feature type="binding site" evidence="1">
    <location>
        <position position="259"/>
    </location>
    <ligand>
        <name>Zn(2+)</name>
        <dbReference type="ChEBI" id="CHEBI:29105"/>
        <label>2</label>
    </ligand>
</feature>
<evidence type="ECO:0000255" key="1">
    <source>
        <dbReference type="HAMAP-Rule" id="MF_00152"/>
    </source>
</evidence>
<organism>
    <name type="scientific">Nitrosopumilus maritimus (strain SCM1)</name>
    <dbReference type="NCBI Taxonomy" id="436308"/>
    <lineage>
        <taxon>Archaea</taxon>
        <taxon>Nitrososphaerota</taxon>
        <taxon>Nitrososphaeria</taxon>
        <taxon>Nitrosopumilales</taxon>
        <taxon>Nitrosopumilaceae</taxon>
        <taxon>Nitrosopumilus</taxon>
    </lineage>
</organism>
<proteinExistence type="inferred from homology"/>
<dbReference type="EC" id="3.1.21.2" evidence="1"/>
<dbReference type="EMBL" id="CP000866">
    <property type="protein sequence ID" value="ABX11964.1"/>
    <property type="molecule type" value="Genomic_DNA"/>
</dbReference>
<dbReference type="RefSeq" id="WP_012214451.1">
    <property type="nucleotide sequence ID" value="NC_010085.1"/>
</dbReference>
<dbReference type="SMR" id="A9A555"/>
<dbReference type="STRING" id="436308.Nmar_0064"/>
<dbReference type="EnsemblBacteria" id="ABX11964">
    <property type="protein sequence ID" value="ABX11964"/>
    <property type="gene ID" value="Nmar_0064"/>
</dbReference>
<dbReference type="GeneID" id="5773060"/>
<dbReference type="KEGG" id="nmr:Nmar_0064"/>
<dbReference type="eggNOG" id="arCOG01894">
    <property type="taxonomic scope" value="Archaea"/>
</dbReference>
<dbReference type="HOGENOM" id="CLU_025885_0_1_2"/>
<dbReference type="InParanoid" id="A9A555"/>
<dbReference type="OrthoDB" id="33250at2157"/>
<dbReference type="PhylomeDB" id="A9A555"/>
<dbReference type="Proteomes" id="UP000000792">
    <property type="component" value="Chromosome"/>
</dbReference>
<dbReference type="GO" id="GO:0008833">
    <property type="term" value="F:deoxyribonuclease IV (phage-T4-induced) activity"/>
    <property type="evidence" value="ECO:0007669"/>
    <property type="project" value="UniProtKB-UniRule"/>
</dbReference>
<dbReference type="GO" id="GO:0003677">
    <property type="term" value="F:DNA binding"/>
    <property type="evidence" value="ECO:0007669"/>
    <property type="project" value="InterPro"/>
</dbReference>
<dbReference type="GO" id="GO:0003906">
    <property type="term" value="F:DNA-(apurinic or apyrimidinic site) endonuclease activity"/>
    <property type="evidence" value="ECO:0000318"/>
    <property type="project" value="GO_Central"/>
</dbReference>
<dbReference type="GO" id="GO:0008081">
    <property type="term" value="F:phosphoric diester hydrolase activity"/>
    <property type="evidence" value="ECO:0000318"/>
    <property type="project" value="GO_Central"/>
</dbReference>
<dbReference type="GO" id="GO:0008270">
    <property type="term" value="F:zinc ion binding"/>
    <property type="evidence" value="ECO:0007669"/>
    <property type="project" value="UniProtKB-UniRule"/>
</dbReference>
<dbReference type="GO" id="GO:0006284">
    <property type="term" value="P:base-excision repair"/>
    <property type="evidence" value="ECO:0000318"/>
    <property type="project" value="GO_Central"/>
</dbReference>
<dbReference type="CDD" id="cd00019">
    <property type="entry name" value="AP2Ec"/>
    <property type="match status" value="1"/>
</dbReference>
<dbReference type="FunFam" id="3.20.20.150:FF:000001">
    <property type="entry name" value="Probable endonuclease 4"/>
    <property type="match status" value="1"/>
</dbReference>
<dbReference type="Gene3D" id="3.20.20.150">
    <property type="entry name" value="Divalent-metal-dependent TIM barrel enzymes"/>
    <property type="match status" value="1"/>
</dbReference>
<dbReference type="HAMAP" id="MF_00152">
    <property type="entry name" value="Nfo"/>
    <property type="match status" value="1"/>
</dbReference>
<dbReference type="InterPro" id="IPR001719">
    <property type="entry name" value="AP_endonuc_2"/>
</dbReference>
<dbReference type="InterPro" id="IPR018246">
    <property type="entry name" value="AP_endonuc_F2_Zn_BS"/>
</dbReference>
<dbReference type="InterPro" id="IPR036237">
    <property type="entry name" value="Xyl_isomerase-like_sf"/>
</dbReference>
<dbReference type="InterPro" id="IPR013022">
    <property type="entry name" value="Xyl_isomerase-like_TIM-brl"/>
</dbReference>
<dbReference type="NCBIfam" id="TIGR00587">
    <property type="entry name" value="nfo"/>
    <property type="match status" value="1"/>
</dbReference>
<dbReference type="PANTHER" id="PTHR21445:SF0">
    <property type="entry name" value="APURINIC-APYRIMIDINIC ENDONUCLEASE"/>
    <property type="match status" value="1"/>
</dbReference>
<dbReference type="PANTHER" id="PTHR21445">
    <property type="entry name" value="ENDONUCLEASE IV ENDODEOXYRIBONUCLEASE IV"/>
    <property type="match status" value="1"/>
</dbReference>
<dbReference type="Pfam" id="PF01261">
    <property type="entry name" value="AP_endonuc_2"/>
    <property type="match status" value="1"/>
</dbReference>
<dbReference type="SMART" id="SM00518">
    <property type="entry name" value="AP2Ec"/>
    <property type="match status" value="1"/>
</dbReference>
<dbReference type="SUPFAM" id="SSF51658">
    <property type="entry name" value="Xylose isomerase-like"/>
    <property type="match status" value="1"/>
</dbReference>
<dbReference type="PROSITE" id="PS00730">
    <property type="entry name" value="AP_NUCLEASE_F2_2"/>
    <property type="match status" value="1"/>
</dbReference>
<dbReference type="PROSITE" id="PS00731">
    <property type="entry name" value="AP_NUCLEASE_F2_3"/>
    <property type="match status" value="1"/>
</dbReference>
<dbReference type="PROSITE" id="PS51432">
    <property type="entry name" value="AP_NUCLEASE_F2_4"/>
    <property type="match status" value="1"/>
</dbReference>
<name>END4_NITMS</name>